<dbReference type="EC" id="1.3.1.-" evidence="2"/>
<dbReference type="EMBL" id="AF041047">
    <property type="protein sequence ID" value="AAC04337.1"/>
    <property type="status" value="ALT_SEQ"/>
    <property type="molecule type" value="Genomic_DNA"/>
</dbReference>
<dbReference type="EMBL" id="CM000785">
    <property type="protein sequence ID" value="AQL05047.1"/>
    <property type="status" value="ALT_SEQ"/>
    <property type="molecule type" value="Genomic_DNA"/>
</dbReference>
<dbReference type="EMBL" id="AY101997">
    <property type="protein sequence ID" value="AAM78355.1"/>
    <property type="status" value="ALT_FRAME"/>
    <property type="molecule type" value="Genomic_DNA"/>
</dbReference>
<dbReference type="PIR" id="T01499">
    <property type="entry name" value="T01499"/>
</dbReference>
<dbReference type="SMR" id="A0A1D6P520"/>
<dbReference type="FunCoup" id="A0A1D6P520">
    <property type="interactions" value="30"/>
</dbReference>
<dbReference type="STRING" id="4577.A0A1D6P520"/>
<dbReference type="PaxDb" id="4577-GRMZM2G086773_P01"/>
<dbReference type="eggNOG" id="KOG1502">
    <property type="taxonomic scope" value="Eukaryota"/>
</dbReference>
<dbReference type="Proteomes" id="UP000007305">
    <property type="component" value="Unplaced"/>
</dbReference>
<dbReference type="ExpressionAtlas" id="A0A1D6P520">
    <property type="expression patterns" value="baseline and differential"/>
</dbReference>
<dbReference type="GO" id="GO:0004033">
    <property type="term" value="F:aldo-keto reductase (NADPH) activity"/>
    <property type="evidence" value="ECO:0000250"/>
    <property type="project" value="UniProtKB"/>
</dbReference>
<dbReference type="GO" id="GO:0016491">
    <property type="term" value="F:oxidoreductase activity"/>
    <property type="evidence" value="ECO:0000250"/>
    <property type="project" value="UniProtKB"/>
</dbReference>
<dbReference type="GO" id="GO:0050832">
    <property type="term" value="P:defense response to fungus"/>
    <property type="evidence" value="ECO:0000314"/>
    <property type="project" value="UniProtKB"/>
</dbReference>
<dbReference type="GO" id="GO:0009407">
    <property type="term" value="P:toxin catabolic process"/>
    <property type="evidence" value="ECO:0000314"/>
    <property type="project" value="UniProtKB"/>
</dbReference>
<dbReference type="FunFam" id="3.40.50.720:FF:000409">
    <property type="entry name" value="NADPH HC toxin reductase"/>
    <property type="match status" value="1"/>
</dbReference>
<dbReference type="Gene3D" id="3.40.50.720">
    <property type="entry name" value="NAD(P)-binding Rossmann-like Domain"/>
    <property type="match status" value="1"/>
</dbReference>
<dbReference type="InterPro" id="IPR001509">
    <property type="entry name" value="Epimerase_deHydtase"/>
</dbReference>
<dbReference type="InterPro" id="IPR036291">
    <property type="entry name" value="NAD(P)-bd_dom_sf"/>
</dbReference>
<dbReference type="InterPro" id="IPR050425">
    <property type="entry name" value="NAD(P)_dehydrat-like"/>
</dbReference>
<dbReference type="PANTHER" id="PTHR10366">
    <property type="entry name" value="NAD DEPENDENT EPIMERASE/DEHYDRATASE"/>
    <property type="match status" value="1"/>
</dbReference>
<dbReference type="PANTHER" id="PTHR10366:SF738">
    <property type="entry name" value="NAD-DEPENDENT EPIMERASE_DEHYDRATASE DOMAIN-CONTAINING PROTEIN"/>
    <property type="match status" value="1"/>
</dbReference>
<dbReference type="Pfam" id="PF01370">
    <property type="entry name" value="Epimerase"/>
    <property type="match status" value="1"/>
</dbReference>
<dbReference type="SUPFAM" id="SSF51735">
    <property type="entry name" value="NAD(P)-binding Rossmann-fold domains"/>
    <property type="match status" value="1"/>
</dbReference>
<sequence length="359" mass="38411">MNSSSSEVQVCVTGGAGFIGSYLVKKLLEKGYTVHATLRNTGEDRAAAAAGPRRGGASAVVPLFEADLFDAATFAPAIAGCQFVFLVATPYGLEAAGSKYKSTAEAAVAAVRVILRQCEESKTVKRVIHTASISTASPLKDKEAEGSGDGYKDFISESCWTPLNVDYHLRSAHFDKYILAKLRSEQELLSYNGGESPAFEVVTLPLGLVAGDTVLGHAPETLEHAVSPVSREELSFKFLRLLQSLLGSEPLVHVDDACEALLFCMERPSIAGRFFCAAAYPSIHDITDHYASKFPHLDVLRATEAVAVAVQPEVDRLGELGFRYKYGMEEILDSSVACAARLGSLDAAKLNVPDTVSSK</sequence>
<comment type="function">
    <text evidence="2 5 7">In tandem with Hm1, NADPH-dependent HC toxin reductase (HCTR), which inactivates HC toxin, a cyclic tetrapeptide produced by the fungus Cochliobolus carbonum to permit infection and acting as an inhibitor of host histone deacetylases (HDACs), thus conferring resistance against C.carbonum race 1 in resistant cultivars (e.g. cv. B73 and cv. Wisconsin 22) (PubMed:16839576, PubMed:9465077). Catalyzes the production of 8-hydroxy derivative of HC-toxin via the reduction of the 8-keto group of 2-amino-9,10-epoxy-8-oxo-decanoic acid, an amino acid of the HC-toxin (By similarity).</text>
</comment>
<comment type="miscellaneous">
    <text evidence="5">Plants susceptible (e.g. cv. Pr, cv. K41, cv. K44 and cv. K61) to the fungus Cochliobolus carbonum race 1 contain a transposon insertion (Drone) in Hm1 and a deletion in Hm2 due to a loss of resistance (PubMed:9465077). However, the compatible cultivar Missouri 21A (cv. MO21A) possesses other defects in Hm1 and Hm2 alleles coming from different mutational events (PubMed:9465077).</text>
</comment>
<comment type="similarity">
    <text evidence="9">Belongs to the NAD(P)-dependent epimerase/dehydratase family.</text>
</comment>
<comment type="sequence caution" evidence="9">
    <conflict type="erroneous gene model prediction">
        <sequence resource="EMBL-CDS" id="AAC04337"/>
    </conflict>
</comment>
<comment type="sequence caution" evidence="9">
    <conflict type="frameshift">
        <sequence resource="EMBL-CDS" id="AAM78355"/>
    </conflict>
</comment>
<comment type="sequence caution" evidence="9">
    <conflict type="erroneous gene model prediction">
        <sequence resource="EMBL-CDS" id="AQL05047"/>
    </conflict>
</comment>
<gene>
    <name evidence="6 8" type="primary">Hm2</name>
    <name evidence="10" type="ORF">ZEAMMB73_Zm00001d046811</name>
</gene>
<keyword id="KW-0521">NADP</keyword>
<keyword id="KW-0560">Oxidoreductase</keyword>
<keyword id="KW-0611">Plant defense</keyword>
<keyword id="KW-1185">Reference proteome</keyword>
<proteinExistence type="inferred from homology"/>
<feature type="chain" id="PRO_0000458660" description="NADPH HC-toxin reductase 2">
    <location>
        <begin position="1"/>
        <end position="359"/>
    </location>
</feature>
<feature type="active site" description="Proton donor" evidence="4">
    <location>
        <position position="181"/>
    </location>
</feature>
<feature type="binding site" evidence="3">
    <location>
        <position position="39"/>
    </location>
    <ligand>
        <name>NADP(+)</name>
        <dbReference type="ChEBI" id="CHEBI:58349"/>
    </ligand>
</feature>
<feature type="binding site" evidence="3">
    <location>
        <begin position="67"/>
        <end position="68"/>
    </location>
    <ligand>
        <name>NADP(+)</name>
        <dbReference type="ChEBI" id="CHEBI:58349"/>
    </ligand>
</feature>
<feature type="binding site" evidence="3">
    <location>
        <begin position="87"/>
        <end position="89"/>
    </location>
    <ligand>
        <name>NADP(+)</name>
        <dbReference type="ChEBI" id="CHEBI:58349"/>
    </ligand>
</feature>
<feature type="binding site" evidence="1">
    <location>
        <position position="177"/>
    </location>
    <ligand>
        <name>NADP(+)</name>
        <dbReference type="ChEBI" id="CHEBI:58349"/>
    </ligand>
</feature>
<feature type="binding site" evidence="3">
    <location>
        <position position="181"/>
    </location>
    <ligand>
        <name>NADP(+)</name>
        <dbReference type="ChEBI" id="CHEBI:58349"/>
    </ligand>
</feature>
<feature type="binding site" evidence="3">
    <location>
        <begin position="206"/>
        <end position="209"/>
    </location>
    <ligand>
        <name>NADP(+)</name>
        <dbReference type="ChEBI" id="CHEBI:58349"/>
    </ligand>
</feature>
<feature type="binding site" evidence="3">
    <location>
        <position position="221"/>
    </location>
    <ligand>
        <name>NADP(+)</name>
        <dbReference type="ChEBI" id="CHEBI:58349"/>
    </ligand>
</feature>
<feature type="sequence conflict" description="In Ref. 3; AAM78355." evidence="9" ref="3">
    <original>K</original>
    <variation>E</variation>
    <location>
        <position position="122"/>
    </location>
</feature>
<feature type="sequence conflict" description="In Ref. 1; AAC04337." evidence="9" ref="1">
    <original>D</original>
    <variation>Y</variation>
    <location>
        <position position="153"/>
    </location>
</feature>
<feature type="sequence conflict" description="In Ref. 3; AAM78355." evidence="9" ref="3">
    <original>K</original>
    <variation>R</variation>
    <location>
        <position position="237"/>
    </location>
</feature>
<name>HM2_MAIZE</name>
<evidence type="ECO:0000250" key="1">
    <source>
        <dbReference type="UniProtKB" id="A0A059TC02"/>
    </source>
</evidence>
<evidence type="ECO:0000250" key="2">
    <source>
        <dbReference type="UniProtKB" id="O49163"/>
    </source>
</evidence>
<evidence type="ECO:0000250" key="3">
    <source>
        <dbReference type="UniProtKB" id="P51110"/>
    </source>
</evidence>
<evidence type="ECO:0000250" key="4">
    <source>
        <dbReference type="UniProtKB" id="Q12068"/>
    </source>
</evidence>
<evidence type="ECO:0000269" key="5">
    <source>
    </source>
</evidence>
<evidence type="ECO:0000303" key="6">
    <source>
    </source>
</evidence>
<evidence type="ECO:0000303" key="7">
    <source>
    </source>
</evidence>
<evidence type="ECO:0000303" key="8">
    <source>
    </source>
</evidence>
<evidence type="ECO:0000305" key="9"/>
<evidence type="ECO:0000312" key="10">
    <source>
        <dbReference type="EMBL" id="AQL05047.1"/>
    </source>
</evidence>
<organism>
    <name type="scientific">Zea mays</name>
    <name type="common">Maize</name>
    <dbReference type="NCBI Taxonomy" id="4577"/>
    <lineage>
        <taxon>Eukaryota</taxon>
        <taxon>Viridiplantae</taxon>
        <taxon>Streptophyta</taxon>
        <taxon>Embryophyta</taxon>
        <taxon>Tracheophyta</taxon>
        <taxon>Spermatophyta</taxon>
        <taxon>Magnoliopsida</taxon>
        <taxon>Liliopsida</taxon>
        <taxon>Poales</taxon>
        <taxon>Poaceae</taxon>
        <taxon>PACMAD clade</taxon>
        <taxon>Panicoideae</taxon>
        <taxon>Andropogonodae</taxon>
        <taxon>Andropogoneae</taxon>
        <taxon>Tripsacinae</taxon>
        <taxon>Zea</taxon>
    </lineage>
</organism>
<accession>A0A1D6P520</accession>
<accession>O49167</accession>
<accession>Q8L8D5</accession>
<protein>
    <recommendedName>
        <fullName evidence="6 8">NADPH HC-toxin reductase 2</fullName>
        <ecNumber evidence="2">1.3.1.-</ecNumber>
    </recommendedName>
    <alternativeName>
        <fullName evidence="6 8">Disease-defense protein HM2</fullName>
    </alternativeName>
    <alternativeName>
        <fullName evidence="9">NAD-dependent epimerase/dehydratase domain-containing protein HM2</fullName>
    </alternativeName>
    <alternativeName>
        <fullName evidence="9">Protein Helminthosporium carbonum susceptibility 2</fullName>
    </alternativeName>
</protein>
<reference key="1">
    <citation type="journal article" date="1998" name="Proc. Natl. Acad. Sci. U.S.A.">
        <title>Plant-pathogen microevolution: molecular basis for the origin of a fungal disease in maize.</title>
        <authorList>
            <person name="Multani D.S."/>
            <person name="Meeley R.B."/>
            <person name="Paterson A.H."/>
            <person name="Gray J."/>
            <person name="Briggs S.P."/>
            <person name="Johal G.S."/>
        </authorList>
    </citation>
    <scope>NUCLEOTIDE SEQUENCE [GENOMIC DNA]</scope>
    <scope>FUNCTION</scope>
    <source>
        <strain>cv. B73</strain>
        <strain>cv. K41</strain>
        <strain>cv. K44</strain>
        <strain>cv. K61</strain>
        <strain>cv. Missouri 21A</strain>
        <strain>cv. Pr</strain>
        <strain>cv. Wisconsin 22</strain>
    </source>
</reference>
<reference key="2">
    <citation type="journal article" date="2009" name="Science">
        <title>The B73 maize genome: complexity, diversity, and dynamics.</title>
        <authorList>
            <person name="Schnable P.S."/>
            <person name="Ware D."/>
            <person name="Fulton R.S."/>
            <person name="Stein J.C."/>
            <person name="Wei F."/>
            <person name="Pasternak S."/>
            <person name="Liang C."/>
            <person name="Zhang J."/>
            <person name="Fulton L."/>
            <person name="Graves T.A."/>
            <person name="Minx P."/>
            <person name="Reily A.D."/>
            <person name="Courtney L."/>
            <person name="Kruchowski S.S."/>
            <person name="Tomlinson C."/>
            <person name="Strong C."/>
            <person name="Delehaunty K."/>
            <person name="Fronick C."/>
            <person name="Courtney B."/>
            <person name="Rock S.M."/>
            <person name="Belter E."/>
            <person name="Du F."/>
            <person name="Kim K."/>
            <person name="Abbott R.M."/>
            <person name="Cotton M."/>
            <person name="Levy A."/>
            <person name="Marchetto P."/>
            <person name="Ochoa K."/>
            <person name="Jackson S.M."/>
            <person name="Gillam B."/>
            <person name="Chen W."/>
            <person name="Yan L."/>
            <person name="Higginbotham J."/>
            <person name="Cardenas M."/>
            <person name="Waligorski J."/>
            <person name="Applebaum E."/>
            <person name="Phelps L."/>
            <person name="Falcone J."/>
            <person name="Kanchi K."/>
            <person name="Thane T."/>
            <person name="Scimone A."/>
            <person name="Thane N."/>
            <person name="Henke J."/>
            <person name="Wang T."/>
            <person name="Ruppert J."/>
            <person name="Shah N."/>
            <person name="Rotter K."/>
            <person name="Hodges J."/>
            <person name="Ingenthron E."/>
            <person name="Cordes M."/>
            <person name="Kohlberg S."/>
            <person name="Sgro J."/>
            <person name="Delgado B."/>
            <person name="Mead K."/>
            <person name="Chinwalla A."/>
            <person name="Leonard S."/>
            <person name="Crouse K."/>
            <person name="Collura K."/>
            <person name="Kudrna D."/>
            <person name="Currie J."/>
            <person name="He R."/>
            <person name="Angelova A."/>
            <person name="Rajasekar S."/>
            <person name="Mueller T."/>
            <person name="Lomeli R."/>
            <person name="Scara G."/>
            <person name="Ko A."/>
            <person name="Delaney K."/>
            <person name="Wissotski M."/>
            <person name="Lopez G."/>
            <person name="Campos D."/>
            <person name="Braidotti M."/>
            <person name="Ashley E."/>
            <person name="Golser W."/>
            <person name="Kim H."/>
            <person name="Lee S."/>
            <person name="Lin J."/>
            <person name="Dujmic Z."/>
            <person name="Kim W."/>
            <person name="Talag J."/>
            <person name="Zuccolo A."/>
            <person name="Fan C."/>
            <person name="Sebastian A."/>
            <person name="Kramer M."/>
            <person name="Spiegel L."/>
            <person name="Nascimento L."/>
            <person name="Zutavern T."/>
            <person name="Miller B."/>
            <person name="Ambroise C."/>
            <person name="Muller S."/>
            <person name="Spooner W."/>
            <person name="Narechania A."/>
            <person name="Ren L."/>
            <person name="Wei S."/>
            <person name="Kumari S."/>
            <person name="Faga B."/>
            <person name="Levy M.J."/>
            <person name="McMahan L."/>
            <person name="Van Buren P."/>
            <person name="Vaughn M.W."/>
            <person name="Ying K."/>
            <person name="Yeh C.-T."/>
            <person name="Emrich S.J."/>
            <person name="Jia Y."/>
            <person name="Kalyanaraman A."/>
            <person name="Hsia A.-P."/>
            <person name="Barbazuk W.B."/>
            <person name="Baucom R.S."/>
            <person name="Brutnell T.P."/>
            <person name="Carpita N.C."/>
            <person name="Chaparro C."/>
            <person name="Chia J.-M."/>
            <person name="Deragon J.-M."/>
            <person name="Estill J.C."/>
            <person name="Fu Y."/>
            <person name="Jeddeloh J.A."/>
            <person name="Han Y."/>
            <person name="Lee H."/>
            <person name="Li P."/>
            <person name="Lisch D.R."/>
            <person name="Liu S."/>
            <person name="Liu Z."/>
            <person name="Nagel D.H."/>
            <person name="McCann M.C."/>
            <person name="SanMiguel P."/>
            <person name="Myers A.M."/>
            <person name="Nettleton D."/>
            <person name="Nguyen J."/>
            <person name="Penning B.W."/>
            <person name="Ponnala L."/>
            <person name="Schneider K.L."/>
            <person name="Schwartz D.C."/>
            <person name="Sharma A."/>
            <person name="Soderlund C."/>
            <person name="Springer N.M."/>
            <person name="Sun Q."/>
            <person name="Wang H."/>
            <person name="Waterman M."/>
            <person name="Westerman R."/>
            <person name="Wolfgruber T.K."/>
            <person name="Yang L."/>
            <person name="Yu Y."/>
            <person name="Zhang L."/>
            <person name="Zhou S."/>
            <person name="Zhu Q."/>
            <person name="Bennetzen J.L."/>
            <person name="Dawe R.K."/>
            <person name="Jiang J."/>
            <person name="Jiang N."/>
            <person name="Presting G.G."/>
            <person name="Wessler S.R."/>
            <person name="Aluru S."/>
            <person name="Martienssen R.A."/>
            <person name="Clifton S.W."/>
            <person name="McCombie W.R."/>
            <person name="Wing R.A."/>
            <person name="Wilson R.K."/>
        </authorList>
    </citation>
    <scope>NUCLEOTIDE SEQUENCE [LARGE SCALE GENOMIC DNA]</scope>
    <source>
        <strain>cv. B73</strain>
        <tissue>Seedling</tissue>
    </source>
</reference>
<reference key="3">
    <citation type="journal article" date="2002" name="Genetics">
        <title>Population genetics of duplicated disease-defense genes, hm1 and hm2, in maize (Zea mays ssp. mays L.) and its wild ancestor (Zea mays ssp. parviglumis).</title>
        <authorList>
            <person name="Zhang L."/>
            <person name="Peek A.S."/>
            <person name="Dunams D."/>
            <person name="Gaut B.S."/>
        </authorList>
    </citation>
    <scope>NUCLEOTIDE SEQUENCE [GENOMIC DNA] OF 33-279</scope>
    <source>
        <strain>cv. Pisccorunto</strain>
    </source>
</reference>
<reference key="4">
    <citation type="journal article" date="2006" name="Phytochemistry">
        <title>HC-toxin.</title>
        <authorList>
            <person name="Walton J.D."/>
        </authorList>
    </citation>
    <scope>REVIEW ON HC-TOXIN</scope>
</reference>